<proteinExistence type="evidence at protein level"/>
<name>PIPNA_MOUSE</name>
<accession>P53810</accession>
<keyword id="KW-0002">3D-structure</keyword>
<keyword id="KW-0007">Acetylation</keyword>
<keyword id="KW-0963">Cytoplasm</keyword>
<keyword id="KW-0903">Direct protein sequencing</keyword>
<keyword id="KW-0445">Lipid transport</keyword>
<keyword id="KW-0446">Lipid-binding</keyword>
<keyword id="KW-0539">Nucleus</keyword>
<keyword id="KW-1185">Reference proteome</keyword>
<keyword id="KW-0813">Transport</keyword>
<comment type="function">
    <text evidence="1 4">Catalyzes the transfer of phosphatidylinositol (PI) and phosphatidylcholine (PC) between membranes (PubMed:8049244). Shows a preference for PI and PC containing shorter saturated or monosaturated acyl chains at the sn-1 and sn-2 positions (By similarity). Preference order for PC is C16:1 &gt; C16:0 &gt; C18:1 &gt; C18:0 &gt; C20:4 and for PI is C16:1 &gt; C16:0 &gt; C18:1 &gt; C18:0 &gt; C20:4 &gt; C20:3 (By similarity).</text>
</comment>
<comment type="catalytic activity">
    <reaction evidence="4">
        <text>a 1,2-diacyl-sn-glycero-3-phosphocholine(in) = a 1,2-diacyl-sn-glycero-3-phosphocholine(out)</text>
        <dbReference type="Rhea" id="RHEA:38571"/>
        <dbReference type="ChEBI" id="CHEBI:57643"/>
    </reaction>
    <physiologicalReaction direction="left-to-right" evidence="7">
        <dbReference type="Rhea" id="RHEA:38572"/>
    </physiologicalReaction>
</comment>
<comment type="catalytic activity">
    <reaction evidence="4">
        <text>a 1,2-diacyl-sn-glycero-3-phospho-(1D-myo-inositol)(in) = a 1,2-diacyl-sn-glycero-3-phospho-(1D-myo-inositol)(out)</text>
        <dbReference type="Rhea" id="RHEA:38691"/>
        <dbReference type="ChEBI" id="CHEBI:57880"/>
    </reaction>
    <physiologicalReaction direction="left-to-right" evidence="7">
        <dbReference type="Rhea" id="RHEA:38692"/>
    </physiologicalReaction>
</comment>
<comment type="subcellular location">
    <subcellularLocation>
        <location evidence="3">Cytoplasm</location>
    </subcellularLocation>
    <subcellularLocation>
        <location evidence="3">Nucleus</location>
    </subcellularLocation>
</comment>
<comment type="PTM">
    <text evidence="4">Phosphorylated by PKC in a calcium and phosphatidylserine-dependent manner.</text>
</comment>
<comment type="disease">
    <text evidence="5">Defects in Pitpna are the cause of the vibrator phenotype which is characterized by early-onset progressive action tremor, degeneration of brain stem and spinal cord neurons, and juvenile death. The mutation is due to the insertion of an intracisternal A particle retrotransposon in intron 4 which results in a 5-fold reduction in protein levels.</text>
</comment>
<comment type="similarity">
    <text evidence="6">Belongs to the PtdIns transfer protein family. PI transfer class I subfamily.</text>
</comment>
<gene>
    <name type="primary">Pitpna</name>
    <name type="synonym">Pitpn</name>
</gene>
<organism>
    <name type="scientific">Mus musculus</name>
    <name type="common">Mouse</name>
    <dbReference type="NCBI Taxonomy" id="10090"/>
    <lineage>
        <taxon>Eukaryota</taxon>
        <taxon>Metazoa</taxon>
        <taxon>Chordata</taxon>
        <taxon>Craniata</taxon>
        <taxon>Vertebrata</taxon>
        <taxon>Euteleostomi</taxon>
        <taxon>Mammalia</taxon>
        <taxon>Eutheria</taxon>
        <taxon>Euarchontoglires</taxon>
        <taxon>Glires</taxon>
        <taxon>Rodentia</taxon>
        <taxon>Myomorpha</taxon>
        <taxon>Muroidea</taxon>
        <taxon>Muridae</taxon>
        <taxon>Murinae</taxon>
        <taxon>Mus</taxon>
        <taxon>Mus</taxon>
    </lineage>
</organism>
<reference key="1">
    <citation type="journal article" date="1994" name="Biochim. Biophys. Acta">
        <title>Characterization of mouse phosphatidylinositol transfer protein expressed in Escherichia coli.</title>
        <authorList>
            <person name="Geijtenbeek T.B.H."/>
            <person name="de Groot E."/>
            <person name="van Baal J."/>
            <person name="Brunink F."/>
            <person name="Westerman J."/>
            <person name="Snoek G.T."/>
            <person name="Wirtz K.W."/>
        </authorList>
    </citation>
    <scope>NUCLEOTIDE SEQUENCE [MRNA]</scope>
    <scope>PROTEIN SEQUENCE OF 2-25</scope>
    <scope>FUNCTION</scope>
    <scope>CATALYTIC ACTIVITY</scope>
    <scope>PHOSPHORYLATION</scope>
    <source>
        <strain>SWR/J</strain>
    </source>
</reference>
<reference key="2">
    <citation type="journal article" date="1997" name="Neuron">
        <title>The vibrator mutation causes neurodegeneration via reduced expression of PITP alpha: positional complementation cloning and extragenic suppression.</title>
        <authorList>
            <person name="Hamilton B.A."/>
            <person name="Smith D.J."/>
            <person name="Mueller K.L."/>
            <person name="Kerrebrock A.W."/>
            <person name="Bronson R.T."/>
            <person name="van Berkel V."/>
            <person name="Daly M.J."/>
            <person name="Kruglyak L."/>
            <person name="Reeve M.P."/>
            <person name="Nemhauser J.L."/>
            <person name="Hawkins T.L."/>
            <person name="Rubin E.M."/>
            <person name="Lander E.S."/>
        </authorList>
    </citation>
    <scope>NUCLEOTIDE SEQUENCE [GENOMIC DNA / MRNA]</scope>
    <scope>DISEASE</scope>
    <source>
        <strain>DBA/2J</strain>
        <tissue>Brain</tissue>
    </source>
</reference>
<reference key="3">
    <citation type="journal article" date="2004" name="Genome Res.">
        <title>The status, quality, and expansion of the NIH full-length cDNA project: the Mammalian Gene Collection (MGC).</title>
        <authorList>
            <consortium name="The MGC Project Team"/>
        </authorList>
    </citation>
    <scope>NUCLEOTIDE SEQUENCE [LARGE SCALE MRNA]</scope>
    <source>
        <strain>C57BL/6J</strain>
        <tissue>Brain</tissue>
    </source>
</reference>
<reference key="4">
    <citation type="submission" date="2007-03" db="UniProtKB">
        <authorList>
            <person name="Lubec G."/>
            <person name="Klug S."/>
        </authorList>
    </citation>
    <scope>PROTEIN SEQUENCE OF 9-50; 88-96; 112-128 AND 136-147</scope>
    <scope>IDENTIFICATION BY MASS SPECTROMETRY</scope>
    <source>
        <tissue>Hippocampus</tissue>
    </source>
</reference>
<reference key="5">
    <citation type="journal article" date="1995" name="Biochem. J.">
        <title>An isoform of the phosphatidylinositol-transfer protein transfers sphingomyelin and is associated with the Golgi system.</title>
        <authorList>
            <person name="de Vries K.J."/>
            <person name="Heinrichs A.A."/>
            <person name="Cunningham E."/>
            <person name="Brunink F."/>
            <person name="Westerman J."/>
            <person name="Somerharju P.J."/>
            <person name="Cockcroft S."/>
            <person name="Wirtz K.W."/>
            <person name="Snoek G.T."/>
        </authorList>
    </citation>
    <scope>SUBCELLULAR LOCATION</scope>
    <source>
        <tissue>Brain</tissue>
    </source>
</reference>
<reference key="6">
    <citation type="journal article" date="2010" name="Cell">
        <title>A tissue-specific atlas of mouse protein phosphorylation and expression.</title>
        <authorList>
            <person name="Huttlin E.L."/>
            <person name="Jedrychowski M.P."/>
            <person name="Elias J.E."/>
            <person name="Goswami T."/>
            <person name="Rad R."/>
            <person name="Beausoleil S.A."/>
            <person name="Villen J."/>
            <person name="Haas W."/>
            <person name="Sowa M.E."/>
            <person name="Gygi S.P."/>
        </authorList>
    </citation>
    <scope>IDENTIFICATION BY MASS SPECTROMETRY [LARGE SCALE ANALYSIS]</scope>
    <source>
        <tissue>Brain</tissue>
        <tissue>Brown adipose tissue</tissue>
        <tissue>Heart</tissue>
        <tissue>Kidney</tissue>
        <tissue>Liver</tissue>
        <tissue>Lung</tissue>
        <tissue>Pancreas</tissue>
        <tissue>Spleen</tissue>
        <tissue>Testis</tissue>
    </source>
</reference>
<reference key="7">
    <citation type="journal article" date="2002" name="EMBO J.">
        <title>Structure of apo-phosphatidylinositol transfer protein alpha provides insight into membrane association.</title>
        <authorList>
            <person name="Schouten A."/>
            <person name="Agianian B."/>
            <person name="Westerman J."/>
            <person name="Kroon J."/>
            <person name="Wirtz K.W."/>
            <person name="Gros P."/>
        </authorList>
    </citation>
    <scope>X-RAY CRYSTALLOGRAPHY (2.0 ANGSTROMS)</scope>
</reference>
<dbReference type="EMBL" id="S72681">
    <property type="protein sequence ID" value="AAC60690.1"/>
    <property type="molecule type" value="mRNA"/>
</dbReference>
<dbReference type="EMBL" id="U96725">
    <property type="protein sequence ID" value="AAC53266.1"/>
    <property type="molecule type" value="mRNA"/>
</dbReference>
<dbReference type="EMBL" id="U96726">
    <property type="protein sequence ID" value="AAC60756.1"/>
    <property type="molecule type" value="Genomic_DNA"/>
</dbReference>
<dbReference type="EMBL" id="BC056171">
    <property type="protein sequence ID" value="AAH56171.1"/>
    <property type="molecule type" value="mRNA"/>
</dbReference>
<dbReference type="CCDS" id="CCDS25052.1"/>
<dbReference type="RefSeq" id="NP_032876.1">
    <property type="nucleotide sequence ID" value="NM_008850.2"/>
</dbReference>
<dbReference type="PDB" id="1KCM">
    <property type="method" value="X-ray"/>
    <property type="resolution" value="2.00 A"/>
    <property type="chains" value="A=2-271"/>
</dbReference>
<dbReference type="PDBsum" id="1KCM"/>
<dbReference type="SMR" id="P53810"/>
<dbReference type="BioGRID" id="202184">
    <property type="interactions" value="7"/>
</dbReference>
<dbReference type="FunCoup" id="P53810">
    <property type="interactions" value="3796"/>
</dbReference>
<dbReference type="STRING" id="10090.ENSMUSP00000115723"/>
<dbReference type="iPTMnet" id="P53810"/>
<dbReference type="PhosphoSitePlus" id="P53810"/>
<dbReference type="SwissPalm" id="P53810"/>
<dbReference type="REPRODUCTION-2DPAGE" id="P53810"/>
<dbReference type="jPOST" id="P53810"/>
<dbReference type="PaxDb" id="10090-ENSMUSP00000115723"/>
<dbReference type="PeptideAtlas" id="P53810"/>
<dbReference type="ProteomicsDB" id="289578"/>
<dbReference type="Pumba" id="P53810"/>
<dbReference type="Antibodypedia" id="5311">
    <property type="antibodies" value="189 antibodies from 32 providers"/>
</dbReference>
<dbReference type="DNASU" id="18738"/>
<dbReference type="Ensembl" id="ENSMUST00000143219.8">
    <property type="protein sequence ID" value="ENSMUSP00000115723.2"/>
    <property type="gene ID" value="ENSMUSG00000017781.19"/>
</dbReference>
<dbReference type="GeneID" id="18738"/>
<dbReference type="KEGG" id="mmu:18738"/>
<dbReference type="UCSC" id="uc007kei.1">
    <property type="organism name" value="mouse"/>
</dbReference>
<dbReference type="AGR" id="MGI:99887"/>
<dbReference type="CTD" id="5306"/>
<dbReference type="MGI" id="MGI:99887">
    <property type="gene designation" value="Pitpna"/>
</dbReference>
<dbReference type="VEuPathDB" id="HostDB:ENSMUSG00000017781"/>
<dbReference type="eggNOG" id="KOG3668">
    <property type="taxonomic scope" value="Eukaryota"/>
</dbReference>
<dbReference type="GeneTree" id="ENSGT00940000157119"/>
<dbReference type="HOGENOM" id="CLU_046509_0_0_1"/>
<dbReference type="InParanoid" id="P53810"/>
<dbReference type="OMA" id="QHNVHEL"/>
<dbReference type="OrthoDB" id="12186at9989"/>
<dbReference type="PhylomeDB" id="P53810"/>
<dbReference type="TreeFam" id="TF313279"/>
<dbReference type="BioGRID-ORCS" id="18738">
    <property type="hits" value="3 hits in 80 CRISPR screens"/>
</dbReference>
<dbReference type="ChiTaRS" id="Pitpna">
    <property type="organism name" value="mouse"/>
</dbReference>
<dbReference type="EvolutionaryTrace" id="P53810"/>
<dbReference type="PRO" id="PR:P53810"/>
<dbReference type="Proteomes" id="UP000000589">
    <property type="component" value="Chromosome 11"/>
</dbReference>
<dbReference type="RNAct" id="P53810">
    <property type="molecule type" value="protein"/>
</dbReference>
<dbReference type="Bgee" id="ENSMUSG00000017781">
    <property type="expression patterns" value="Expressed in small intestine Peyer's patch and 265 other cell types or tissues"/>
</dbReference>
<dbReference type="ExpressionAtlas" id="P53810">
    <property type="expression patterns" value="baseline and differential"/>
</dbReference>
<dbReference type="GO" id="GO:0005737">
    <property type="term" value="C:cytoplasm"/>
    <property type="evidence" value="ECO:0000314"/>
    <property type="project" value="UniProtKB"/>
</dbReference>
<dbReference type="GO" id="GO:0005829">
    <property type="term" value="C:cytosol"/>
    <property type="evidence" value="ECO:0000304"/>
    <property type="project" value="Reactome"/>
</dbReference>
<dbReference type="GO" id="GO:0016020">
    <property type="term" value="C:membrane"/>
    <property type="evidence" value="ECO:0000250"/>
    <property type="project" value="MGI"/>
</dbReference>
<dbReference type="GO" id="GO:0043209">
    <property type="term" value="C:myelin sheath"/>
    <property type="evidence" value="ECO:0007005"/>
    <property type="project" value="UniProtKB"/>
</dbReference>
<dbReference type="GO" id="GO:0005634">
    <property type="term" value="C:nucleus"/>
    <property type="evidence" value="ECO:0000314"/>
    <property type="project" value="UniProtKB"/>
</dbReference>
<dbReference type="GO" id="GO:0008289">
    <property type="term" value="F:lipid binding"/>
    <property type="evidence" value="ECO:0000250"/>
    <property type="project" value="MGI"/>
</dbReference>
<dbReference type="GO" id="GO:0031210">
    <property type="term" value="F:phosphatidylcholine binding"/>
    <property type="evidence" value="ECO:0000314"/>
    <property type="project" value="UniProtKB"/>
</dbReference>
<dbReference type="GO" id="GO:0120019">
    <property type="term" value="F:phosphatidylcholine transfer activity"/>
    <property type="evidence" value="ECO:0000314"/>
    <property type="project" value="UniProtKB"/>
</dbReference>
<dbReference type="GO" id="GO:0035091">
    <property type="term" value="F:phosphatidylinositol binding"/>
    <property type="evidence" value="ECO:0000314"/>
    <property type="project" value="UniProtKB"/>
</dbReference>
<dbReference type="GO" id="GO:0008526">
    <property type="term" value="F:phosphatidylinositol transfer activity"/>
    <property type="evidence" value="ECO:0000314"/>
    <property type="project" value="UniProtKB"/>
</dbReference>
<dbReference type="GO" id="GO:0005543">
    <property type="term" value="F:phospholipid binding"/>
    <property type="evidence" value="ECO:0000266"/>
    <property type="project" value="MGI"/>
</dbReference>
<dbReference type="GO" id="GO:0007409">
    <property type="term" value="P:axonogenesis"/>
    <property type="evidence" value="ECO:0000315"/>
    <property type="project" value="BHF-UCL"/>
</dbReference>
<dbReference type="CDD" id="cd08888">
    <property type="entry name" value="SRPBCC_PITPNA-B_like"/>
    <property type="match status" value="1"/>
</dbReference>
<dbReference type="FunFam" id="3.30.530.20:FF:000004">
    <property type="entry name" value="Phosphatidylinositol transfer protein alpha isoform"/>
    <property type="match status" value="1"/>
</dbReference>
<dbReference type="Gene3D" id="3.30.530.20">
    <property type="match status" value="1"/>
</dbReference>
<dbReference type="InterPro" id="IPR001666">
    <property type="entry name" value="PI_transfer"/>
</dbReference>
<dbReference type="InterPro" id="IPR055261">
    <property type="entry name" value="PI_transfer_N"/>
</dbReference>
<dbReference type="InterPro" id="IPR023393">
    <property type="entry name" value="START-like_dom_sf"/>
</dbReference>
<dbReference type="PANTHER" id="PTHR10658">
    <property type="entry name" value="PHOSPHATIDYLINOSITOL TRANSFER PROTEIN"/>
    <property type="match status" value="1"/>
</dbReference>
<dbReference type="PANTHER" id="PTHR10658:SF28">
    <property type="entry name" value="PHOSPHATIDYLINOSITOL TRANSFER PROTEIN ALPHA ISOFORM"/>
    <property type="match status" value="1"/>
</dbReference>
<dbReference type="Pfam" id="PF02121">
    <property type="entry name" value="IP_trans"/>
    <property type="match status" value="1"/>
</dbReference>
<dbReference type="PRINTS" id="PR00391">
    <property type="entry name" value="PITRANSFER"/>
</dbReference>
<dbReference type="SUPFAM" id="SSF55961">
    <property type="entry name" value="Bet v1-like"/>
    <property type="match status" value="1"/>
</dbReference>
<feature type="initiator methionine" description="Removed" evidence="3">
    <location>
        <position position="1"/>
    </location>
</feature>
<feature type="chain" id="PRO_0000191640" description="Phosphatidylinositol transfer protein alpha isoform">
    <location>
        <begin position="2"/>
        <end position="271"/>
    </location>
</feature>
<feature type="region of interest" description="Disordered" evidence="2">
    <location>
        <begin position="251"/>
        <end position="271"/>
    </location>
</feature>
<feature type="compositionally biased region" description="Basic and acidic residues" evidence="2">
    <location>
        <begin position="251"/>
        <end position="264"/>
    </location>
</feature>
<feature type="binding site" evidence="1">
    <location>
        <position position="59"/>
    </location>
    <ligand>
        <name>a 1,2-diacyl-sn-glycero-3-phospho-(1D-myo-inositol)</name>
        <dbReference type="ChEBI" id="CHEBI:57880"/>
    </ligand>
</feature>
<feature type="binding site" evidence="1">
    <location>
        <position position="61"/>
    </location>
    <ligand>
        <name>a 1,2-diacyl-sn-glycero-3-phospho-(1D-myo-inositol)</name>
        <dbReference type="ChEBI" id="CHEBI:57880"/>
    </ligand>
</feature>
<feature type="binding site" evidence="1">
    <location>
        <position position="86"/>
    </location>
    <ligand>
        <name>a 1,2-diacyl-sn-glycero-3-phospho-(1D-myo-inositol)</name>
        <dbReference type="ChEBI" id="CHEBI:57880"/>
    </ligand>
</feature>
<feature type="binding site" evidence="1">
    <location>
        <position position="90"/>
    </location>
    <ligand>
        <name>a 1,2-diacyl-sn-glycero-3-phospho-(1D-myo-inositol)</name>
        <dbReference type="ChEBI" id="CHEBI:57880"/>
    </ligand>
</feature>
<feature type="binding site" evidence="1">
    <location>
        <position position="97"/>
    </location>
    <ligand>
        <name>a 1,2-diacyl-sn-glycero-3-phospho-(1D-myo-inositol)</name>
        <dbReference type="ChEBI" id="CHEBI:57880"/>
    </ligand>
</feature>
<feature type="binding site" evidence="1">
    <location>
        <position position="195"/>
    </location>
    <ligand>
        <name>a 1,2-diacyl-sn-glycero-3-phospho-(1D-myo-inositol)</name>
        <dbReference type="ChEBI" id="CHEBI:57880"/>
    </ligand>
</feature>
<feature type="modified residue" description="N6-acetyllysine" evidence="1">
    <location>
        <position position="216"/>
    </location>
</feature>
<feature type="strand" evidence="8">
    <location>
        <begin position="3"/>
        <end position="13"/>
    </location>
</feature>
<feature type="helix" evidence="8">
    <location>
        <begin position="15"/>
        <end position="30"/>
    </location>
</feature>
<feature type="turn" evidence="8">
    <location>
        <begin position="36"/>
        <end position="39"/>
    </location>
</feature>
<feature type="strand" evidence="8">
    <location>
        <begin position="40"/>
        <end position="49"/>
    </location>
</feature>
<feature type="strand" evidence="8">
    <location>
        <begin position="55"/>
        <end position="64"/>
    </location>
</feature>
<feature type="helix" evidence="8">
    <location>
        <begin position="66"/>
        <end position="68"/>
    </location>
</feature>
<feature type="helix" evidence="8">
    <location>
        <begin position="71"/>
        <end position="74"/>
    </location>
</feature>
<feature type="turn" evidence="8">
    <location>
        <begin position="79"/>
        <end position="82"/>
    </location>
</feature>
<feature type="strand" evidence="8">
    <location>
        <begin position="83"/>
        <end position="91"/>
    </location>
</feature>
<feature type="strand" evidence="8">
    <location>
        <begin position="94"/>
        <end position="101"/>
    </location>
</feature>
<feature type="turn" evidence="8">
    <location>
        <begin position="102"/>
        <end position="104"/>
    </location>
</feature>
<feature type="helix" evidence="8">
    <location>
        <begin position="105"/>
        <end position="107"/>
    </location>
</feature>
<feature type="strand" evidence="8">
    <location>
        <begin position="108"/>
        <end position="121"/>
    </location>
</feature>
<feature type="helix" evidence="8">
    <location>
        <begin position="131"/>
        <end position="134"/>
    </location>
</feature>
<feature type="strand" evidence="8">
    <location>
        <begin position="138"/>
        <end position="142"/>
    </location>
</feature>
<feature type="helix" evidence="8">
    <location>
        <begin position="147"/>
        <end position="149"/>
    </location>
</feature>
<feature type="helix" evidence="8">
    <location>
        <begin position="152"/>
        <end position="154"/>
    </location>
</feature>
<feature type="helix" evidence="8">
    <location>
        <begin position="157"/>
        <end position="159"/>
    </location>
</feature>
<feature type="turn" evidence="8">
    <location>
        <begin position="161"/>
        <end position="163"/>
    </location>
</feature>
<feature type="turn" evidence="8">
    <location>
        <begin position="167"/>
        <end position="169"/>
    </location>
</feature>
<feature type="helix" evidence="8">
    <location>
        <begin position="178"/>
        <end position="182"/>
    </location>
</feature>
<feature type="strand" evidence="8">
    <location>
        <begin position="191"/>
        <end position="201"/>
    </location>
</feature>
<feature type="helix" evidence="8">
    <location>
        <begin position="207"/>
        <end position="231"/>
    </location>
</feature>
<feature type="helix" evidence="8">
    <location>
        <begin position="233"/>
        <end position="236"/>
    </location>
</feature>
<feature type="helix" evidence="8">
    <location>
        <begin position="241"/>
        <end position="253"/>
    </location>
</feature>
<evidence type="ECO:0000250" key="1">
    <source>
        <dbReference type="UniProtKB" id="Q00169"/>
    </source>
</evidence>
<evidence type="ECO:0000256" key="2">
    <source>
        <dbReference type="SAM" id="MobiDB-lite"/>
    </source>
</evidence>
<evidence type="ECO:0000269" key="3">
    <source>
    </source>
</evidence>
<evidence type="ECO:0000269" key="4">
    <source>
    </source>
</evidence>
<evidence type="ECO:0000269" key="5">
    <source>
    </source>
</evidence>
<evidence type="ECO:0000305" key="6"/>
<evidence type="ECO:0000305" key="7">
    <source>
    </source>
</evidence>
<evidence type="ECO:0007829" key="8">
    <source>
        <dbReference type="PDB" id="1KCM"/>
    </source>
</evidence>
<sequence>MVLLKEYRVILPVSVDEYQVGQLYSVAEASKNETGGGEGVEVLVNEPYEKDDGEKGQYTHKIYHLQSKVPTFVRMLAPEGALNIHEKAWNAYPYCRTVITNEYMKEDFLIKIETWHKPDLGTQENVHKLEPEAWKHVEAIYIDIADRSQVLSKDYKAEEDPAKFKSVKTGRGPLGPNWKQELVNQKDCPYMCAYKLVTVKFKWWGLQNKVENFIHKQEKRLFTNFHRQLFCWLDKWVDLTMDDIRRMEEETKRQLDEMRQKDPVKGMTADD</sequence>
<protein>
    <recommendedName>
        <fullName>Phosphatidylinositol transfer protein alpha isoform</fullName>
        <shortName>PI-TP-alpha</shortName>
        <shortName>PtdIns transfer protein alpha</shortName>
        <shortName>PtdInsTP alpha</shortName>
    </recommendedName>
</protein>